<gene>
    <name evidence="1" type="primary">mtlD</name>
    <name type="ordered locus">SAV2159</name>
</gene>
<accession>P63955</accession>
<accession>Q99SA1</accession>
<dbReference type="EC" id="1.1.1.17" evidence="1"/>
<dbReference type="EMBL" id="BA000017">
    <property type="protein sequence ID" value="BAB58321.1"/>
    <property type="molecule type" value="Genomic_DNA"/>
</dbReference>
<dbReference type="RefSeq" id="WP_000648723.1">
    <property type="nucleotide sequence ID" value="NC_002758.2"/>
</dbReference>
<dbReference type="SMR" id="P63955"/>
<dbReference type="DNASU" id="1122175"/>
<dbReference type="KEGG" id="sav:SAV2159"/>
<dbReference type="HOGENOM" id="CLU_036089_2_0_9"/>
<dbReference type="PhylomeDB" id="P63955"/>
<dbReference type="Proteomes" id="UP000002481">
    <property type="component" value="Chromosome"/>
</dbReference>
<dbReference type="GO" id="GO:0005829">
    <property type="term" value="C:cytosol"/>
    <property type="evidence" value="ECO:0007669"/>
    <property type="project" value="TreeGrafter"/>
</dbReference>
<dbReference type="GO" id="GO:0008926">
    <property type="term" value="F:mannitol-1-phosphate 5-dehydrogenase activity"/>
    <property type="evidence" value="ECO:0007669"/>
    <property type="project" value="UniProtKB-UniRule"/>
</dbReference>
<dbReference type="GO" id="GO:0019592">
    <property type="term" value="P:mannitol catabolic process"/>
    <property type="evidence" value="ECO:0007669"/>
    <property type="project" value="TreeGrafter"/>
</dbReference>
<dbReference type="FunFam" id="3.40.50.720:FF:000316">
    <property type="entry name" value="Mannitol-1-phosphate 5-dehydrogenase"/>
    <property type="match status" value="1"/>
</dbReference>
<dbReference type="Gene3D" id="1.10.1040.10">
    <property type="entry name" value="N-(1-d-carboxylethyl)-l-norvaline Dehydrogenase, domain 2"/>
    <property type="match status" value="1"/>
</dbReference>
<dbReference type="Gene3D" id="3.40.50.720">
    <property type="entry name" value="NAD(P)-binding Rossmann-like Domain"/>
    <property type="match status" value="1"/>
</dbReference>
<dbReference type="HAMAP" id="MF_00196">
    <property type="entry name" value="Mannitol_dehydrog"/>
    <property type="match status" value="1"/>
</dbReference>
<dbReference type="InterPro" id="IPR008927">
    <property type="entry name" value="6-PGluconate_DH-like_C_sf"/>
</dbReference>
<dbReference type="InterPro" id="IPR013328">
    <property type="entry name" value="6PGD_dom2"/>
</dbReference>
<dbReference type="InterPro" id="IPR023028">
    <property type="entry name" value="Mannitol_1_phos_5_DH"/>
</dbReference>
<dbReference type="InterPro" id="IPR000669">
    <property type="entry name" value="Mannitol_DH"/>
</dbReference>
<dbReference type="InterPro" id="IPR013118">
    <property type="entry name" value="Mannitol_DH_C"/>
</dbReference>
<dbReference type="InterPro" id="IPR023027">
    <property type="entry name" value="Mannitol_DH_CS"/>
</dbReference>
<dbReference type="InterPro" id="IPR013131">
    <property type="entry name" value="Mannitol_DH_N"/>
</dbReference>
<dbReference type="InterPro" id="IPR036291">
    <property type="entry name" value="NAD(P)-bd_dom_sf"/>
</dbReference>
<dbReference type="NCBIfam" id="NF002645">
    <property type="entry name" value="PRK02318.1-1"/>
    <property type="match status" value="1"/>
</dbReference>
<dbReference type="NCBIfam" id="NF002652">
    <property type="entry name" value="PRK02318.2-5"/>
    <property type="match status" value="1"/>
</dbReference>
<dbReference type="PANTHER" id="PTHR30524:SF0">
    <property type="entry name" value="ALTRONATE OXIDOREDUCTASE-RELATED"/>
    <property type="match status" value="1"/>
</dbReference>
<dbReference type="PANTHER" id="PTHR30524">
    <property type="entry name" value="MANNITOL-1-PHOSPHATE 5-DEHYDROGENASE"/>
    <property type="match status" value="1"/>
</dbReference>
<dbReference type="Pfam" id="PF01232">
    <property type="entry name" value="Mannitol_dh"/>
    <property type="match status" value="1"/>
</dbReference>
<dbReference type="Pfam" id="PF08125">
    <property type="entry name" value="Mannitol_dh_C"/>
    <property type="match status" value="1"/>
</dbReference>
<dbReference type="PRINTS" id="PR00084">
    <property type="entry name" value="MTLDHDRGNASE"/>
</dbReference>
<dbReference type="SUPFAM" id="SSF48179">
    <property type="entry name" value="6-phosphogluconate dehydrogenase C-terminal domain-like"/>
    <property type="match status" value="1"/>
</dbReference>
<dbReference type="SUPFAM" id="SSF51735">
    <property type="entry name" value="NAD(P)-binding Rossmann-fold domains"/>
    <property type="match status" value="1"/>
</dbReference>
<dbReference type="PROSITE" id="PS00974">
    <property type="entry name" value="MANNITOL_DHGENASE"/>
    <property type="match status" value="1"/>
</dbReference>
<comment type="catalytic activity">
    <reaction evidence="1">
        <text>D-mannitol 1-phosphate + NAD(+) = beta-D-fructose 6-phosphate + NADH + H(+)</text>
        <dbReference type="Rhea" id="RHEA:19661"/>
        <dbReference type="ChEBI" id="CHEBI:15378"/>
        <dbReference type="ChEBI" id="CHEBI:57540"/>
        <dbReference type="ChEBI" id="CHEBI:57634"/>
        <dbReference type="ChEBI" id="CHEBI:57945"/>
        <dbReference type="ChEBI" id="CHEBI:61381"/>
        <dbReference type="EC" id="1.1.1.17"/>
    </reaction>
</comment>
<comment type="similarity">
    <text evidence="1">Belongs to the mannitol dehydrogenase family.</text>
</comment>
<reference key="1">
    <citation type="journal article" date="2001" name="Lancet">
        <title>Whole genome sequencing of meticillin-resistant Staphylococcus aureus.</title>
        <authorList>
            <person name="Kuroda M."/>
            <person name="Ohta T."/>
            <person name="Uchiyama I."/>
            <person name="Baba T."/>
            <person name="Yuzawa H."/>
            <person name="Kobayashi I."/>
            <person name="Cui L."/>
            <person name="Oguchi A."/>
            <person name="Aoki K."/>
            <person name="Nagai Y."/>
            <person name="Lian J.-Q."/>
            <person name="Ito T."/>
            <person name="Kanamori M."/>
            <person name="Matsumaru H."/>
            <person name="Maruyama A."/>
            <person name="Murakami H."/>
            <person name="Hosoyama A."/>
            <person name="Mizutani-Ui Y."/>
            <person name="Takahashi N.K."/>
            <person name="Sawano T."/>
            <person name="Inoue R."/>
            <person name="Kaito C."/>
            <person name="Sekimizu K."/>
            <person name="Hirakawa H."/>
            <person name="Kuhara S."/>
            <person name="Goto S."/>
            <person name="Yabuzaki J."/>
            <person name="Kanehisa M."/>
            <person name="Yamashita A."/>
            <person name="Oshima K."/>
            <person name="Furuya K."/>
            <person name="Yoshino C."/>
            <person name="Shiba T."/>
            <person name="Hattori M."/>
            <person name="Ogasawara N."/>
            <person name="Hayashi H."/>
            <person name="Hiramatsu K."/>
        </authorList>
    </citation>
    <scope>NUCLEOTIDE SEQUENCE [LARGE SCALE GENOMIC DNA]</scope>
    <source>
        <strain>Mu50 / ATCC 700699</strain>
    </source>
</reference>
<protein>
    <recommendedName>
        <fullName evidence="1">Mannitol-1-phosphate 5-dehydrogenase</fullName>
        <ecNumber evidence="1">1.1.1.17</ecNumber>
    </recommendedName>
</protein>
<proteinExistence type="inferred from homology"/>
<feature type="chain" id="PRO_0000170720" description="Mannitol-1-phosphate 5-dehydrogenase">
    <location>
        <begin position="1"/>
        <end position="368"/>
    </location>
</feature>
<feature type="binding site" evidence="1">
    <location>
        <begin position="3"/>
        <end position="14"/>
    </location>
    <ligand>
        <name>NAD(+)</name>
        <dbReference type="ChEBI" id="CHEBI:57540"/>
    </ligand>
</feature>
<evidence type="ECO:0000255" key="1">
    <source>
        <dbReference type="HAMAP-Rule" id="MF_00196"/>
    </source>
</evidence>
<name>MTLD_STAAM</name>
<keyword id="KW-0520">NAD</keyword>
<keyword id="KW-0560">Oxidoreductase</keyword>
<organism>
    <name type="scientific">Staphylococcus aureus (strain Mu50 / ATCC 700699)</name>
    <dbReference type="NCBI Taxonomy" id="158878"/>
    <lineage>
        <taxon>Bacteria</taxon>
        <taxon>Bacillati</taxon>
        <taxon>Bacillota</taxon>
        <taxon>Bacilli</taxon>
        <taxon>Bacillales</taxon>
        <taxon>Staphylococcaceae</taxon>
        <taxon>Staphylococcus</taxon>
    </lineage>
</organism>
<sequence length="368" mass="40936">MKAVHFGAGNIGRGFIGYILADNNVKVTFADVNEEIINALAHDHQYDVILADESKTTTRVNNVDAINSMQPSEALKQAILEADIITTAVGVNILPIIAKSFAPFLKEKTNHVNIVACENAIMATDTLKKAVLDITGPLGNNIHFANSAVDRIVPLQKNENILDVMVEPFYEWVVEKDAWYGPELNHIKYVDDLTPYIERKLLTVNTGHAYLAYAGKFAGKATVLDAVKDSSIEAGLRRVLAETSQYITNEFDFTEAEQAGYVEKIIDRFNNSYLSDEVTRVGRGTLRKIGPKDRIIKPLTYLYNKDLERTGLLNTAALLLKYDDTADQETVEKNNYIKEHGLKAFLSEYAKVDDGLADEIIEAYNSLS</sequence>